<reference key="1">
    <citation type="journal article" date="2000" name="Nature">
        <title>The genome sequence of the thermoacidophilic scavenger Thermoplasma acidophilum.</title>
        <authorList>
            <person name="Ruepp A."/>
            <person name="Graml W."/>
            <person name="Santos-Martinez M.-L."/>
            <person name="Koretke K.K."/>
            <person name="Volker C."/>
            <person name="Mewes H.-W."/>
            <person name="Frishman D."/>
            <person name="Stocker S."/>
            <person name="Lupas A.N."/>
            <person name="Baumeister W."/>
        </authorList>
    </citation>
    <scope>NUCLEOTIDE SEQUENCE [LARGE SCALE GENOMIC DNA]</scope>
    <source>
        <strain>ATCC 25905 / DSM 1728 / JCM 9062 / NBRC 15155 / AMRC-C165</strain>
    </source>
</reference>
<comment type="function">
    <text evidence="1">Catalyzes the ferrous insertion into protoporphyrin IX.</text>
</comment>
<comment type="catalytic activity">
    <reaction evidence="1">
        <text>heme b + 2 H(+) = protoporphyrin IX + Fe(2+)</text>
        <dbReference type="Rhea" id="RHEA:22584"/>
        <dbReference type="ChEBI" id="CHEBI:15378"/>
        <dbReference type="ChEBI" id="CHEBI:29033"/>
        <dbReference type="ChEBI" id="CHEBI:57306"/>
        <dbReference type="ChEBI" id="CHEBI:60344"/>
        <dbReference type="EC" id="4.98.1.1"/>
    </reaction>
</comment>
<comment type="pathway">
    <text evidence="1">Porphyrin-containing compound metabolism; protoheme biosynthesis; protoheme from protoporphyrin-IX: step 1/1.</text>
</comment>
<comment type="subcellular location">
    <subcellularLocation>
        <location evidence="1">Cytoplasm</location>
    </subcellularLocation>
</comment>
<comment type="similarity">
    <text evidence="1 2">Belongs to the ferrochelatase family.</text>
</comment>
<accession>Q9HLB8</accession>
<evidence type="ECO:0000255" key="1">
    <source>
        <dbReference type="HAMAP-Rule" id="MF_00323"/>
    </source>
</evidence>
<evidence type="ECO:0000305" key="2"/>
<dbReference type="EC" id="4.98.1.1" evidence="1"/>
<dbReference type="EMBL" id="AL445063">
    <property type="protein sequence ID" value="CAC11456.1"/>
    <property type="molecule type" value="Genomic_DNA"/>
</dbReference>
<dbReference type="RefSeq" id="WP_010900740.1">
    <property type="nucleotide sequence ID" value="NC_002578.1"/>
</dbReference>
<dbReference type="SMR" id="Q9HLB8"/>
<dbReference type="STRING" id="273075.gene:9571528"/>
<dbReference type="PaxDb" id="273075-Ta0311"/>
<dbReference type="EnsemblBacteria" id="CAC11456">
    <property type="protein sequence ID" value="CAC11456"/>
    <property type="gene ID" value="CAC11456"/>
</dbReference>
<dbReference type="KEGG" id="tac:Ta0311"/>
<dbReference type="eggNOG" id="arCOG05373">
    <property type="taxonomic scope" value="Archaea"/>
</dbReference>
<dbReference type="HOGENOM" id="CLU_018884_2_1_2"/>
<dbReference type="InParanoid" id="Q9HLB8"/>
<dbReference type="OrthoDB" id="56534at2157"/>
<dbReference type="UniPathway" id="UPA00252">
    <property type="reaction ID" value="UER00325"/>
</dbReference>
<dbReference type="Proteomes" id="UP000001024">
    <property type="component" value="Chromosome"/>
</dbReference>
<dbReference type="GO" id="GO:0005737">
    <property type="term" value="C:cytoplasm"/>
    <property type="evidence" value="ECO:0007669"/>
    <property type="project" value="UniProtKB-SubCell"/>
</dbReference>
<dbReference type="GO" id="GO:0004325">
    <property type="term" value="F:ferrochelatase activity"/>
    <property type="evidence" value="ECO:0007669"/>
    <property type="project" value="UniProtKB-UniRule"/>
</dbReference>
<dbReference type="GO" id="GO:0046872">
    <property type="term" value="F:metal ion binding"/>
    <property type="evidence" value="ECO:0007669"/>
    <property type="project" value="UniProtKB-KW"/>
</dbReference>
<dbReference type="GO" id="GO:0006783">
    <property type="term" value="P:heme biosynthetic process"/>
    <property type="evidence" value="ECO:0007669"/>
    <property type="project" value="UniProtKB-UniRule"/>
</dbReference>
<dbReference type="CDD" id="cd00419">
    <property type="entry name" value="Ferrochelatase_C"/>
    <property type="match status" value="1"/>
</dbReference>
<dbReference type="CDD" id="cd03411">
    <property type="entry name" value="Ferrochelatase_N"/>
    <property type="match status" value="1"/>
</dbReference>
<dbReference type="Gene3D" id="3.40.50.1400">
    <property type="match status" value="2"/>
</dbReference>
<dbReference type="HAMAP" id="MF_00323">
    <property type="entry name" value="Ferrochelatase"/>
    <property type="match status" value="1"/>
</dbReference>
<dbReference type="InterPro" id="IPR001015">
    <property type="entry name" value="Ferrochelatase"/>
</dbReference>
<dbReference type="InterPro" id="IPR033644">
    <property type="entry name" value="Ferrochelatase_C"/>
</dbReference>
<dbReference type="InterPro" id="IPR033659">
    <property type="entry name" value="Ferrochelatase_N"/>
</dbReference>
<dbReference type="PANTHER" id="PTHR11108">
    <property type="entry name" value="FERROCHELATASE"/>
    <property type="match status" value="1"/>
</dbReference>
<dbReference type="PANTHER" id="PTHR11108:SF1">
    <property type="entry name" value="FERROCHELATASE, MITOCHONDRIAL"/>
    <property type="match status" value="1"/>
</dbReference>
<dbReference type="Pfam" id="PF00762">
    <property type="entry name" value="Ferrochelatase"/>
    <property type="match status" value="1"/>
</dbReference>
<dbReference type="SUPFAM" id="SSF53800">
    <property type="entry name" value="Chelatase"/>
    <property type="match status" value="1"/>
</dbReference>
<proteinExistence type="inferred from homology"/>
<sequence>MKSALLLLSYGSPERIEDLDEYLKNIFNGKPVPESVREENLRKYEMFGGRSPSNRIIESIARKLHEKIGDDMDVILAYKHWNPSIEEAVKGLGSYDNIVAIPLFSFYSQNVKDSYLNPLESALRRYGFSPRLEFVNGLANSDLFLPMWANIISEDASEDSFYLFDAHSLPAPDREEDYLFWLRYSTYKISQILGLSRSDFGFQGGHLGWLGPSIYDVLNRIDASKITVIPISFLYDHLEILYDLDYEFRKAVEAKGMHYRRVRMPNDSAMMVNMIERAARSAITHLSGEKINGSIIGQPRIADTDNGR</sequence>
<keyword id="KW-0963">Cytoplasm</keyword>
<keyword id="KW-0350">Heme biosynthesis</keyword>
<keyword id="KW-0408">Iron</keyword>
<keyword id="KW-0456">Lyase</keyword>
<keyword id="KW-0479">Metal-binding</keyword>
<keyword id="KW-0627">Porphyrin biosynthesis</keyword>
<keyword id="KW-1185">Reference proteome</keyword>
<organism>
    <name type="scientific">Thermoplasma acidophilum (strain ATCC 25905 / DSM 1728 / JCM 9062 / NBRC 15155 / AMRC-C165)</name>
    <dbReference type="NCBI Taxonomy" id="273075"/>
    <lineage>
        <taxon>Archaea</taxon>
        <taxon>Methanobacteriati</taxon>
        <taxon>Thermoplasmatota</taxon>
        <taxon>Thermoplasmata</taxon>
        <taxon>Thermoplasmatales</taxon>
        <taxon>Thermoplasmataceae</taxon>
        <taxon>Thermoplasma</taxon>
    </lineage>
</organism>
<name>HEMH_THEAC</name>
<protein>
    <recommendedName>
        <fullName evidence="1">Ferrochelatase</fullName>
        <ecNumber evidence="1">4.98.1.1</ecNumber>
    </recommendedName>
    <alternativeName>
        <fullName evidence="1">Heme synthase</fullName>
    </alternativeName>
    <alternativeName>
        <fullName evidence="1">Protoheme ferro-lyase</fullName>
    </alternativeName>
</protein>
<feature type="chain" id="PRO_0000175237" description="Ferrochelatase">
    <location>
        <begin position="1"/>
        <end position="308"/>
    </location>
</feature>
<feature type="binding site" evidence="1">
    <location>
        <position position="167"/>
    </location>
    <ligand>
        <name>Fe cation</name>
        <dbReference type="ChEBI" id="CHEBI:24875"/>
    </ligand>
</feature>
<feature type="binding site" evidence="1">
    <location>
        <position position="239"/>
    </location>
    <ligand>
        <name>Fe cation</name>
        <dbReference type="ChEBI" id="CHEBI:24875"/>
    </ligand>
</feature>
<gene>
    <name evidence="1" type="primary">hemH</name>
    <name type="ordered locus">Ta0311</name>
</gene>